<comment type="function">
    <text evidence="1 2 3">Part of the dynactin complex that activates the molecular motor dynein for ultra-processive transport along microtubules (PubMed:33734450, PubMed:36071160). Together with dynein is involved in spindle assembly and cytokinesis (By similarity).</text>
</comment>
<comment type="subunit">
    <text evidence="2 3">Subunit of dynactin, a multiprotein complex part of a tripartite complex with dynein and a adapter, such as BICDL1, BICD2 or HOOK3 (PubMed:33734450, PubMed:36071160). The dynactin complex is built around ACTR1A/ACTB filament and consists of an actin-related filament composed of a shoulder domain, a pointed end and a barbed end. Its length is defined by its flexible shoulder domain. The soulder is composed of 2 DCTN1 subunits, 4 DCTN2 and 2 DCTN3. The 4 DCNT2 (via N-terminus) bind the ACTR1A filament and act as molecular rulers to determine the length. The pointed end is important for binding dynein-dynactin cargo adapters. Consists of 4 subunits: ACTR10, DCNT4, DCTN5 and DCTN6 (PubMed:33734450). The barbed end is composed of a CAPZA1:CAPZB heterodimers, which binds ACTR1A/ACTB filament and dynactin and stabilizes dynactin (PubMed:33734450, PubMed:36071160).</text>
</comment>
<comment type="subcellular location">
    <subcellularLocation>
        <location evidence="1">Cytoplasm</location>
    </subcellularLocation>
    <subcellularLocation>
        <location evidence="1">Cytoplasm</location>
        <location evidence="1">Cytoskeleton</location>
        <location evidence="1">Microtubule organizing center</location>
        <location evidence="1">Centrosome</location>
    </subcellularLocation>
    <subcellularLocation>
        <location evidence="1">Chromosome</location>
        <location evidence="1">Centromere</location>
        <location evidence="1">Kinetochore</location>
    </subcellularLocation>
    <subcellularLocation>
        <location evidence="1">Cytoplasm</location>
        <location evidence="1">Cytoskeleton</location>
        <location evidence="1">Spindle</location>
    </subcellularLocation>
    <subcellularLocation>
        <location evidence="1">Cleavage furrow</location>
    </subcellularLocation>
    <subcellularLocation>
        <location evidence="1">Midbody</location>
    </subcellularLocation>
    <subcellularLocation>
        <location evidence="5">Cytoplasm</location>
        <location evidence="5">Cytoskeleton</location>
    </subcellularLocation>
    <text evidence="1">Localizes to punctate cytoplasmic structures and to the centrosome during interphase, and to kinetochores and to spindle poles throughout mitosis. Colocalizes with dynein to the cleavage furrow and to midbody of dividing cells.</text>
</comment>
<comment type="similarity">
    <text evidence="4">Belongs to the dynactin subunit 3 family.</text>
</comment>
<sequence length="186" mass="21166">MAGVTDVQRLQARLEELERWVYGPGGSRGSRKVADGLVKVQVALGNIASKRERVKILYKKIEDLIKYLDPEYMDRIAIPDASKLQFILAEEQFILSQVALLEQVEALVPMLDSAHIKAVPEHAARLQRLAQIHIQQQDQCVEITEESKALLEEYNKTTMLLSKQFVQWDELLCQLEAAKQVKPAEE</sequence>
<proteinExistence type="evidence at protein level"/>
<protein>
    <recommendedName>
        <fullName>Dynactin subunit 3</fullName>
    </recommendedName>
</protein>
<reference evidence="7" key="1">
    <citation type="submission" date="2009-11" db="EMBL/GenBank/DDBJ databases">
        <authorList>
            <consortium name="Porcine genome sequencing project"/>
        </authorList>
    </citation>
    <scope>NUCLEOTIDE SEQUENCE [LARGE SCALE GENOMIC DNA]</scope>
    <source>
        <strain evidence="7">Duroc</strain>
    </source>
</reference>
<reference evidence="6" key="2">
    <citation type="journal article" date="2019" name="PeerJ">
        <title>Genes of the pig, Sus scrofa, reconstructed with EvidentialGene.</title>
        <authorList>
            <person name="Gilbert D.G."/>
        </authorList>
    </citation>
    <scope>NUCLEOTIDE SEQUENCE [LARGE SCALE MRNA]</scope>
</reference>
<reference evidence="9" key="3">
    <citation type="journal article" date="2021" name="EMBO J.">
        <title>Cryo-EM reveals the complex architecture of dynactin's shoulder region and pointed end.</title>
        <authorList>
            <person name="Lau C.K."/>
            <person name="O'Reilly F.J."/>
            <person name="Santhanam B."/>
            <person name="Lacey S.E."/>
            <person name="Rappsilber J."/>
            <person name="Carter A.P."/>
        </authorList>
    </citation>
    <scope>STRUCTURE BY ELECTRON MICROSCOPY (3.80 ANGSTROMS)</scope>
</reference>
<reference evidence="10" key="4">
    <citation type="journal article" date="2022" name="Nature">
        <title>Structure of dynein-dynactin on microtubules shows tandem adaptor binding.</title>
        <authorList>
            <person name="Chaaban S."/>
            <person name="Carter A.P."/>
        </authorList>
    </citation>
    <scope>STRUCTURE BY ELECTRON MICROSCOPY (20.00 ANGSTROMS)</scope>
</reference>
<organism evidence="7">
    <name type="scientific">Sus scrofa</name>
    <name type="common">Pig</name>
    <dbReference type="NCBI Taxonomy" id="9823"/>
    <lineage>
        <taxon>Eukaryota</taxon>
        <taxon>Metazoa</taxon>
        <taxon>Chordata</taxon>
        <taxon>Craniata</taxon>
        <taxon>Vertebrata</taxon>
        <taxon>Euteleostomi</taxon>
        <taxon>Mammalia</taxon>
        <taxon>Eutheria</taxon>
        <taxon>Laurasiatheria</taxon>
        <taxon>Artiodactyla</taxon>
        <taxon>Suina</taxon>
        <taxon>Suidae</taxon>
        <taxon>Sus</taxon>
    </lineage>
</organism>
<feature type="initiator methionine" description="Removed" evidence="1">
    <location>
        <position position="1"/>
    </location>
</feature>
<feature type="chain" id="PRO_0000457463" description="Dynactin subunit 3" evidence="1">
    <location>
        <begin position="2"/>
        <end position="186"/>
    </location>
</feature>
<feature type="modified residue" description="N-acetylalanine" evidence="1">
    <location>
        <position position="2"/>
    </location>
</feature>
<accession>F1SEC0</accession>
<dbReference type="EMBL" id="AEMK02000074">
    <property type="status" value="NOT_ANNOTATED_CDS"/>
    <property type="molecule type" value="Genomic_DNA"/>
</dbReference>
<dbReference type="EMBL" id="DQIR01160736">
    <property type="protein sequence ID" value="HDB16213.1"/>
    <property type="molecule type" value="Transcribed_RNA"/>
</dbReference>
<dbReference type="RefSeq" id="XP_003130704.1">
    <property type="nucleotide sequence ID" value="XM_003130656.3"/>
</dbReference>
<dbReference type="PDB" id="6ZNL">
    <property type="method" value="EM"/>
    <property type="resolution" value="3.80 A"/>
    <property type="chains" value="O/o=1-186"/>
</dbReference>
<dbReference type="PDB" id="7Z8F">
    <property type="method" value="EM"/>
    <property type="resolution" value="20.00 A"/>
    <property type="chains" value="O/R=1-186"/>
</dbReference>
<dbReference type="PDB" id="8PTK">
    <property type="method" value="EM"/>
    <property type="resolution" value="10.00 A"/>
    <property type="chains" value="O/R=1-186"/>
</dbReference>
<dbReference type="PDBsum" id="6ZNL"/>
<dbReference type="PDBsum" id="7Z8F"/>
<dbReference type="PDBsum" id="8PTK"/>
<dbReference type="EMDB" id="EMD-11313"/>
<dbReference type="EMDB" id="EMD-14549"/>
<dbReference type="EMDB" id="EMD-17873"/>
<dbReference type="SMR" id="F1SEC0"/>
<dbReference type="FunCoup" id="F1SEC0">
    <property type="interactions" value="1870"/>
</dbReference>
<dbReference type="STRING" id="9823.ENSSSCP00000011701"/>
<dbReference type="PaxDb" id="9823-ENSSSCP00000011701"/>
<dbReference type="PeptideAtlas" id="F1SEC0"/>
<dbReference type="PRIDE" id="F1SEC0"/>
<dbReference type="Ensembl" id="ENSSSCT00000012009.5">
    <property type="protein sequence ID" value="ENSSSCP00000011701.2"/>
    <property type="gene ID" value="ENSSSCG00000010972.5"/>
</dbReference>
<dbReference type="Ensembl" id="ENSSSCT00070038544.1">
    <property type="protein sequence ID" value="ENSSSCP00070032262.1"/>
    <property type="gene ID" value="ENSSSCG00070019479.1"/>
</dbReference>
<dbReference type="Ensembl" id="ENSSSCT00115013670">
    <property type="protein sequence ID" value="ENSSSCP00115012916"/>
    <property type="gene ID" value="ENSSSCG00115007811"/>
</dbReference>
<dbReference type="Ensembl" id="ENSSSCT00130038642">
    <property type="protein sequence ID" value="ENSSSCP00130027194"/>
    <property type="gene ID" value="ENSSSCG00130019910"/>
</dbReference>
<dbReference type="Ensembl" id="ENSSSCT00130040199">
    <property type="protein sequence ID" value="ENSSSCP00130028388"/>
    <property type="gene ID" value="ENSSSCG00130020668"/>
</dbReference>
<dbReference type="GeneID" id="100521815"/>
<dbReference type="KEGG" id="ssc:100521815"/>
<dbReference type="CTD" id="11258"/>
<dbReference type="VGNC" id="VGNC:96152">
    <property type="gene designation" value="DCTN3"/>
</dbReference>
<dbReference type="eggNOG" id="ENOG502RYZ0">
    <property type="taxonomic scope" value="Eukaryota"/>
</dbReference>
<dbReference type="GeneTree" id="ENSGT00390000016210"/>
<dbReference type="HOGENOM" id="CLU_121487_1_0_1"/>
<dbReference type="InParanoid" id="F1SEC0"/>
<dbReference type="OMA" id="IQQQEQC"/>
<dbReference type="OrthoDB" id="16729at2759"/>
<dbReference type="TreeFam" id="TF105248"/>
<dbReference type="Reactome" id="R-SSC-2132295">
    <property type="pathway name" value="MHC class II antigen presentation"/>
</dbReference>
<dbReference type="Reactome" id="R-SSC-2565942">
    <property type="pathway name" value="Regulation of PLK1 Activity at G2/M Transition"/>
</dbReference>
<dbReference type="Reactome" id="R-SSC-3371497">
    <property type="pathway name" value="HSP90 chaperone cycle for steroid hormone receptors (SHR) in the presence of ligand"/>
</dbReference>
<dbReference type="Reactome" id="R-SSC-380259">
    <property type="pathway name" value="Loss of Nlp from mitotic centrosomes"/>
</dbReference>
<dbReference type="Reactome" id="R-SSC-380270">
    <property type="pathway name" value="Recruitment of mitotic centrosome proteins and complexes"/>
</dbReference>
<dbReference type="Reactome" id="R-SSC-380284">
    <property type="pathway name" value="Loss of proteins required for interphase microtubule organization from the centrosome"/>
</dbReference>
<dbReference type="Reactome" id="R-SSC-380320">
    <property type="pathway name" value="Recruitment of NuMA to mitotic centrosomes"/>
</dbReference>
<dbReference type="Reactome" id="R-SSC-5620912">
    <property type="pathway name" value="Anchoring of the basal body to the plasma membrane"/>
</dbReference>
<dbReference type="Reactome" id="R-SSC-6807878">
    <property type="pathway name" value="COPI-mediated anterograde transport"/>
</dbReference>
<dbReference type="Reactome" id="R-SSC-8854518">
    <property type="pathway name" value="AURKA Activation by TPX2"/>
</dbReference>
<dbReference type="Proteomes" id="UP000008227">
    <property type="component" value="Chromosome 10"/>
</dbReference>
<dbReference type="Proteomes" id="UP000314985">
    <property type="component" value="Chromosome 10"/>
</dbReference>
<dbReference type="Proteomes" id="UP000694570">
    <property type="component" value="Unplaced"/>
</dbReference>
<dbReference type="Proteomes" id="UP000694571">
    <property type="component" value="Unplaced"/>
</dbReference>
<dbReference type="Proteomes" id="UP000694720">
    <property type="component" value="Unplaced"/>
</dbReference>
<dbReference type="Proteomes" id="UP000694722">
    <property type="component" value="Unplaced"/>
</dbReference>
<dbReference type="Proteomes" id="UP000694723">
    <property type="component" value="Unplaced"/>
</dbReference>
<dbReference type="Proteomes" id="UP000694724">
    <property type="component" value="Unplaced"/>
</dbReference>
<dbReference type="Proteomes" id="UP000694725">
    <property type="component" value="Unplaced"/>
</dbReference>
<dbReference type="Proteomes" id="UP000694726">
    <property type="component" value="Unplaced"/>
</dbReference>
<dbReference type="Proteomes" id="UP000694727">
    <property type="component" value="Unplaced"/>
</dbReference>
<dbReference type="Proteomes" id="UP000694728">
    <property type="component" value="Unplaced"/>
</dbReference>
<dbReference type="Bgee" id="ENSSSCG00000010972">
    <property type="expression patterns" value="Expressed in forelimb bud and 48 other cell types or tissues"/>
</dbReference>
<dbReference type="ExpressionAtlas" id="F1SEC0">
    <property type="expression patterns" value="baseline"/>
</dbReference>
<dbReference type="GO" id="GO:0005813">
    <property type="term" value="C:centrosome"/>
    <property type="evidence" value="ECO:0007669"/>
    <property type="project" value="UniProtKB-SubCell"/>
</dbReference>
<dbReference type="GO" id="GO:0032154">
    <property type="term" value="C:cleavage furrow"/>
    <property type="evidence" value="ECO:0007669"/>
    <property type="project" value="UniProtKB-SubCell"/>
</dbReference>
<dbReference type="GO" id="GO:0005737">
    <property type="term" value="C:cytoplasm"/>
    <property type="evidence" value="ECO:0007669"/>
    <property type="project" value="UniProtKB-SubCell"/>
</dbReference>
<dbReference type="GO" id="GO:0005869">
    <property type="term" value="C:dynactin complex"/>
    <property type="evidence" value="ECO:0000318"/>
    <property type="project" value="GO_Central"/>
</dbReference>
<dbReference type="GO" id="GO:0000776">
    <property type="term" value="C:kinetochore"/>
    <property type="evidence" value="ECO:0007669"/>
    <property type="project" value="UniProtKB-KW"/>
</dbReference>
<dbReference type="GO" id="GO:0030496">
    <property type="term" value="C:midbody"/>
    <property type="evidence" value="ECO:0007669"/>
    <property type="project" value="UniProtKB-SubCell"/>
</dbReference>
<dbReference type="GO" id="GO:0005819">
    <property type="term" value="C:spindle"/>
    <property type="evidence" value="ECO:0007669"/>
    <property type="project" value="UniProtKB-SubCell"/>
</dbReference>
<dbReference type="GO" id="GO:0061640">
    <property type="term" value="P:cytoskeleton-dependent cytokinesis"/>
    <property type="evidence" value="ECO:0000318"/>
    <property type="project" value="GO_Central"/>
</dbReference>
<dbReference type="InterPro" id="IPR009991">
    <property type="entry name" value="DCTN3"/>
</dbReference>
<dbReference type="PANTHER" id="PTHR28360">
    <property type="entry name" value="DYNACTIN SUBUNIT 3"/>
    <property type="match status" value="1"/>
</dbReference>
<dbReference type="PANTHER" id="PTHR28360:SF1">
    <property type="entry name" value="DYNACTIN SUBUNIT 3"/>
    <property type="match status" value="1"/>
</dbReference>
<dbReference type="Pfam" id="PF07426">
    <property type="entry name" value="Dynactin_p22"/>
    <property type="match status" value="1"/>
</dbReference>
<name>DCTN3_PIG</name>
<keyword id="KW-0002">3D-structure</keyword>
<keyword id="KW-0007">Acetylation</keyword>
<keyword id="KW-0131">Cell cycle</keyword>
<keyword id="KW-0132">Cell division</keyword>
<keyword id="KW-0137">Centromere</keyword>
<keyword id="KW-0158">Chromosome</keyword>
<keyword id="KW-0175">Coiled coil</keyword>
<keyword id="KW-0963">Cytoplasm</keyword>
<keyword id="KW-0206">Cytoskeleton</keyword>
<keyword id="KW-0995">Kinetochore</keyword>
<keyword id="KW-0498">Mitosis</keyword>
<keyword id="KW-1185">Reference proteome</keyword>
<gene>
    <name evidence="8" type="primary">DCTN3</name>
</gene>
<evidence type="ECO:0000250" key="1">
    <source>
        <dbReference type="UniProtKB" id="O75935"/>
    </source>
</evidence>
<evidence type="ECO:0000269" key="2">
    <source>
    </source>
</evidence>
<evidence type="ECO:0000269" key="3">
    <source>
    </source>
</evidence>
<evidence type="ECO:0000305" key="4"/>
<evidence type="ECO:0000305" key="5">
    <source>
    </source>
</evidence>
<evidence type="ECO:0000312" key="6">
    <source>
        <dbReference type="EMBL" id="HDB16213.1"/>
    </source>
</evidence>
<evidence type="ECO:0000312" key="7">
    <source>
        <dbReference type="Proteomes" id="UP000008227"/>
    </source>
</evidence>
<evidence type="ECO:0000312" key="8">
    <source>
        <dbReference type="VGNC" id="VGNC:96152"/>
    </source>
</evidence>
<evidence type="ECO:0007744" key="9">
    <source>
        <dbReference type="PDB" id="6ZNL"/>
    </source>
</evidence>
<evidence type="ECO:0007744" key="10">
    <source>
        <dbReference type="PDB" id="7Z8F"/>
    </source>
</evidence>